<comment type="function">
    <text>Contributes to dephosphorylation of tyrosine 15 of cdc2.</text>
</comment>
<comment type="catalytic activity">
    <reaction evidence="2">
        <text>O-phospho-L-tyrosyl-[protein] + H2O = L-tyrosyl-[protein] + phosphate</text>
        <dbReference type="Rhea" id="RHEA:10684"/>
        <dbReference type="Rhea" id="RHEA-COMP:10136"/>
        <dbReference type="Rhea" id="RHEA-COMP:20101"/>
        <dbReference type="ChEBI" id="CHEBI:15377"/>
        <dbReference type="ChEBI" id="CHEBI:43474"/>
        <dbReference type="ChEBI" id="CHEBI:46858"/>
        <dbReference type="ChEBI" id="CHEBI:61978"/>
        <dbReference type="EC" id="3.1.3.48"/>
    </reaction>
</comment>
<comment type="subcellular location">
    <subcellularLocation>
        <location>Cytoplasm</location>
    </subcellularLocation>
</comment>
<comment type="similarity">
    <text evidence="3">Belongs to the protein-tyrosine phosphatase family. Non-receptor class subfamily.</text>
</comment>
<protein>
    <recommendedName>
        <fullName>Tyrosine-protein phosphatase 3</fullName>
        <ecNumber>3.1.3.48</ecNumber>
    </recommendedName>
    <alternativeName>
        <fullName>Protein-tyrosine phosphatase 3</fullName>
        <shortName>PTPase 3</shortName>
    </alternativeName>
</protein>
<keyword id="KW-0131">Cell cycle</keyword>
<keyword id="KW-0132">Cell division</keyword>
<keyword id="KW-0963">Cytoplasm</keyword>
<keyword id="KW-0378">Hydrolase</keyword>
<keyword id="KW-0498">Mitosis</keyword>
<keyword id="KW-0904">Protein phosphatase</keyword>
<keyword id="KW-1185">Reference proteome</keyword>
<feature type="chain" id="PRO_0000094860" description="Tyrosine-protein phosphatase 3">
    <location>
        <begin position="1"/>
        <end position="303"/>
    </location>
</feature>
<feature type="domain" description="Tyrosine-protein phosphatase" evidence="1">
    <location>
        <begin position="24"/>
        <end position="292"/>
    </location>
</feature>
<feature type="active site" description="Phosphocysteine intermediate" evidence="1 2">
    <location>
        <position position="227"/>
    </location>
</feature>
<accession>P32587</accession>
<gene>
    <name type="primary">pyp3</name>
    <name type="ORF">SPAC11E3.09</name>
</gene>
<dbReference type="EC" id="3.1.3.48"/>
<dbReference type="EMBL" id="X69994">
    <property type="protein sequence ID" value="CAA49609.1"/>
    <property type="molecule type" value="Genomic_DNA"/>
</dbReference>
<dbReference type="EMBL" id="CU329670">
    <property type="protein sequence ID" value="CAB11188.1"/>
    <property type="molecule type" value="Genomic_DNA"/>
</dbReference>
<dbReference type="PIR" id="S28392">
    <property type="entry name" value="S28392"/>
</dbReference>
<dbReference type="RefSeq" id="NP_594934.1">
    <property type="nucleotide sequence ID" value="NM_001020365.2"/>
</dbReference>
<dbReference type="SMR" id="P32587"/>
<dbReference type="BioGRID" id="277948">
    <property type="interactions" value="9"/>
</dbReference>
<dbReference type="FunCoup" id="P32587">
    <property type="interactions" value="564"/>
</dbReference>
<dbReference type="STRING" id="284812.P32587"/>
<dbReference type="PaxDb" id="4896-SPAC11E3.09.1"/>
<dbReference type="EnsemblFungi" id="SPAC11E3.09.1">
    <property type="protein sequence ID" value="SPAC11E3.09.1:pep"/>
    <property type="gene ID" value="SPAC11E3.09"/>
</dbReference>
<dbReference type="GeneID" id="2541443"/>
<dbReference type="KEGG" id="spo:2541443"/>
<dbReference type="PomBase" id="SPAC11E3.09">
    <property type="gene designation" value="pyp3"/>
</dbReference>
<dbReference type="VEuPathDB" id="FungiDB:SPAC11E3.09"/>
<dbReference type="eggNOG" id="KOG0791">
    <property type="taxonomic scope" value="Eukaryota"/>
</dbReference>
<dbReference type="HOGENOM" id="CLU_001645_9_1_1"/>
<dbReference type="InParanoid" id="P32587"/>
<dbReference type="OMA" id="TMICGNI"/>
<dbReference type="PhylomeDB" id="P32587"/>
<dbReference type="Reactome" id="R-SPO-5675221">
    <property type="pathway name" value="Negative regulation of MAPK pathway"/>
</dbReference>
<dbReference type="Reactome" id="R-SPO-6798695">
    <property type="pathway name" value="Neutrophil degranulation"/>
</dbReference>
<dbReference type="PRO" id="PR:P32587"/>
<dbReference type="Proteomes" id="UP000002485">
    <property type="component" value="Chromosome I"/>
</dbReference>
<dbReference type="GO" id="GO:0005829">
    <property type="term" value="C:cytosol"/>
    <property type="evidence" value="ECO:0007005"/>
    <property type="project" value="PomBase"/>
</dbReference>
<dbReference type="GO" id="GO:0005634">
    <property type="term" value="C:nucleus"/>
    <property type="evidence" value="ECO:0007005"/>
    <property type="project" value="PomBase"/>
</dbReference>
<dbReference type="GO" id="GO:0004725">
    <property type="term" value="F:protein tyrosine phosphatase activity"/>
    <property type="evidence" value="ECO:0000314"/>
    <property type="project" value="PomBase"/>
</dbReference>
<dbReference type="GO" id="GO:0051301">
    <property type="term" value="P:cell division"/>
    <property type="evidence" value="ECO:0007669"/>
    <property type="project" value="UniProtKB-KW"/>
</dbReference>
<dbReference type="GO" id="GO:0010971">
    <property type="term" value="P:positive regulation of G2/M transition of mitotic cell cycle"/>
    <property type="evidence" value="ECO:0000315"/>
    <property type="project" value="PomBase"/>
</dbReference>
<dbReference type="GO" id="GO:0007165">
    <property type="term" value="P:signal transduction"/>
    <property type="evidence" value="ECO:0000318"/>
    <property type="project" value="GO_Central"/>
</dbReference>
<dbReference type="CDD" id="cd18533">
    <property type="entry name" value="PTP_fungal"/>
    <property type="match status" value="1"/>
</dbReference>
<dbReference type="FunFam" id="3.90.190.10:FF:000115">
    <property type="entry name" value="Tyrosine-protein phosphatase 1"/>
    <property type="match status" value="1"/>
</dbReference>
<dbReference type="Gene3D" id="3.90.190.10">
    <property type="entry name" value="Protein tyrosine phosphatase superfamily"/>
    <property type="match status" value="1"/>
</dbReference>
<dbReference type="InterPro" id="IPR029021">
    <property type="entry name" value="Prot-tyrosine_phosphatase-like"/>
</dbReference>
<dbReference type="InterPro" id="IPR050348">
    <property type="entry name" value="Protein-Tyr_Phosphatase"/>
</dbReference>
<dbReference type="InterPro" id="IPR000242">
    <property type="entry name" value="PTP_cat"/>
</dbReference>
<dbReference type="InterPro" id="IPR016130">
    <property type="entry name" value="Tyr_Pase_AS"/>
</dbReference>
<dbReference type="InterPro" id="IPR003595">
    <property type="entry name" value="Tyr_Pase_cat"/>
</dbReference>
<dbReference type="InterPro" id="IPR000387">
    <property type="entry name" value="Tyr_Pase_dom"/>
</dbReference>
<dbReference type="PANTHER" id="PTHR19134">
    <property type="entry name" value="RECEPTOR-TYPE TYROSINE-PROTEIN PHOSPHATASE"/>
    <property type="match status" value="1"/>
</dbReference>
<dbReference type="PANTHER" id="PTHR19134:SF449">
    <property type="entry name" value="TYROSINE-PROTEIN PHOSPHATASE 1"/>
    <property type="match status" value="1"/>
</dbReference>
<dbReference type="Pfam" id="PF00102">
    <property type="entry name" value="Y_phosphatase"/>
    <property type="match status" value="1"/>
</dbReference>
<dbReference type="PRINTS" id="PR00700">
    <property type="entry name" value="PRTYPHPHTASE"/>
</dbReference>
<dbReference type="SMART" id="SM00194">
    <property type="entry name" value="PTPc"/>
    <property type="match status" value="1"/>
</dbReference>
<dbReference type="SMART" id="SM00404">
    <property type="entry name" value="PTPc_motif"/>
    <property type="match status" value="1"/>
</dbReference>
<dbReference type="SUPFAM" id="SSF52799">
    <property type="entry name" value="(Phosphotyrosine protein) phosphatases II"/>
    <property type="match status" value="1"/>
</dbReference>
<dbReference type="PROSITE" id="PS00383">
    <property type="entry name" value="TYR_PHOSPHATASE_1"/>
    <property type="match status" value="1"/>
</dbReference>
<dbReference type="PROSITE" id="PS50056">
    <property type="entry name" value="TYR_PHOSPHATASE_2"/>
    <property type="match status" value="1"/>
</dbReference>
<dbReference type="PROSITE" id="PS50055">
    <property type="entry name" value="TYR_PHOSPHATASE_PTP"/>
    <property type="match status" value="1"/>
</dbReference>
<organism>
    <name type="scientific">Schizosaccharomyces pombe (strain 972 / ATCC 24843)</name>
    <name type="common">Fission yeast</name>
    <dbReference type="NCBI Taxonomy" id="284812"/>
    <lineage>
        <taxon>Eukaryota</taxon>
        <taxon>Fungi</taxon>
        <taxon>Dikarya</taxon>
        <taxon>Ascomycota</taxon>
        <taxon>Taphrinomycotina</taxon>
        <taxon>Schizosaccharomycetes</taxon>
        <taxon>Schizosaccharomycetales</taxon>
        <taxon>Schizosaccharomycetaceae</taxon>
        <taxon>Schizosaccharomyces</taxon>
    </lineage>
</organism>
<sequence length="303" mass="34583">MSFKEVSTENGVLTPLITIKEKAYMIIEGLNEEEIELLNTRLPKLSKKALARNRYSNIVPYENTRVRLDPMWKEACDYINASIVKIPSGKTFIATQGPTSNSIDVFWKMVWQSVPKSGIIVMLTKLRERHRLKCDIYWPVELFETLNIGDLSVILVKVYTLTSLNEVQVREFELNKDGVKKKILHFYYNGWPDFGAPHTFSLLSLTRYIKSLSYSPDFETAPIIVHCSAGCGRTGTFMALFEILSQTDDSTSTSKFEVDNIANIVSSLRSQRMQSVQSVDQLVFLYTVSQELLQGKEFLLPQL</sequence>
<reference key="1">
    <citation type="journal article" date="1992" name="EMBO J.">
        <title>Pyp3 PTPase acts as a mitotic inducer in fission yeast.</title>
        <authorList>
            <person name="Millar J.B.A."/>
            <person name="Lenaers G."/>
            <person name="Russell P."/>
        </authorList>
    </citation>
    <scope>NUCLEOTIDE SEQUENCE [GENOMIC DNA]</scope>
</reference>
<reference key="2">
    <citation type="journal article" date="2002" name="Nature">
        <title>The genome sequence of Schizosaccharomyces pombe.</title>
        <authorList>
            <person name="Wood V."/>
            <person name="Gwilliam R."/>
            <person name="Rajandream M.A."/>
            <person name="Lyne M.H."/>
            <person name="Lyne R."/>
            <person name="Stewart A."/>
            <person name="Sgouros J.G."/>
            <person name="Peat N."/>
            <person name="Hayles J."/>
            <person name="Baker S.G."/>
            <person name="Basham D."/>
            <person name="Bowman S."/>
            <person name="Brooks K."/>
            <person name="Brown D."/>
            <person name="Brown S."/>
            <person name="Chillingworth T."/>
            <person name="Churcher C.M."/>
            <person name="Collins M."/>
            <person name="Connor R."/>
            <person name="Cronin A."/>
            <person name="Davis P."/>
            <person name="Feltwell T."/>
            <person name="Fraser A."/>
            <person name="Gentles S."/>
            <person name="Goble A."/>
            <person name="Hamlin N."/>
            <person name="Harris D.E."/>
            <person name="Hidalgo J."/>
            <person name="Hodgson G."/>
            <person name="Holroyd S."/>
            <person name="Hornsby T."/>
            <person name="Howarth S."/>
            <person name="Huckle E.J."/>
            <person name="Hunt S."/>
            <person name="Jagels K."/>
            <person name="James K.D."/>
            <person name="Jones L."/>
            <person name="Jones M."/>
            <person name="Leather S."/>
            <person name="McDonald S."/>
            <person name="McLean J."/>
            <person name="Mooney P."/>
            <person name="Moule S."/>
            <person name="Mungall K.L."/>
            <person name="Murphy L.D."/>
            <person name="Niblett D."/>
            <person name="Odell C."/>
            <person name="Oliver K."/>
            <person name="O'Neil S."/>
            <person name="Pearson D."/>
            <person name="Quail M.A."/>
            <person name="Rabbinowitsch E."/>
            <person name="Rutherford K.M."/>
            <person name="Rutter S."/>
            <person name="Saunders D."/>
            <person name="Seeger K."/>
            <person name="Sharp S."/>
            <person name="Skelton J."/>
            <person name="Simmonds M.N."/>
            <person name="Squares R."/>
            <person name="Squares S."/>
            <person name="Stevens K."/>
            <person name="Taylor K."/>
            <person name="Taylor R.G."/>
            <person name="Tivey A."/>
            <person name="Walsh S.V."/>
            <person name="Warren T."/>
            <person name="Whitehead S."/>
            <person name="Woodward J.R."/>
            <person name="Volckaert G."/>
            <person name="Aert R."/>
            <person name="Robben J."/>
            <person name="Grymonprez B."/>
            <person name="Weltjens I."/>
            <person name="Vanstreels E."/>
            <person name="Rieger M."/>
            <person name="Schaefer M."/>
            <person name="Mueller-Auer S."/>
            <person name="Gabel C."/>
            <person name="Fuchs M."/>
            <person name="Duesterhoeft A."/>
            <person name="Fritzc C."/>
            <person name="Holzer E."/>
            <person name="Moestl D."/>
            <person name="Hilbert H."/>
            <person name="Borzym K."/>
            <person name="Langer I."/>
            <person name="Beck A."/>
            <person name="Lehrach H."/>
            <person name="Reinhardt R."/>
            <person name="Pohl T.M."/>
            <person name="Eger P."/>
            <person name="Zimmermann W."/>
            <person name="Wedler H."/>
            <person name="Wambutt R."/>
            <person name="Purnelle B."/>
            <person name="Goffeau A."/>
            <person name="Cadieu E."/>
            <person name="Dreano S."/>
            <person name="Gloux S."/>
            <person name="Lelaure V."/>
            <person name="Mottier S."/>
            <person name="Galibert F."/>
            <person name="Aves S.J."/>
            <person name="Xiang Z."/>
            <person name="Hunt C."/>
            <person name="Moore K."/>
            <person name="Hurst S.M."/>
            <person name="Lucas M."/>
            <person name="Rochet M."/>
            <person name="Gaillardin C."/>
            <person name="Tallada V.A."/>
            <person name="Garzon A."/>
            <person name="Thode G."/>
            <person name="Daga R.R."/>
            <person name="Cruzado L."/>
            <person name="Jimenez J."/>
            <person name="Sanchez M."/>
            <person name="del Rey F."/>
            <person name="Benito J."/>
            <person name="Dominguez A."/>
            <person name="Revuelta J.L."/>
            <person name="Moreno S."/>
            <person name="Armstrong J."/>
            <person name="Forsburg S.L."/>
            <person name="Cerutti L."/>
            <person name="Lowe T."/>
            <person name="McCombie W.R."/>
            <person name="Paulsen I."/>
            <person name="Potashkin J."/>
            <person name="Shpakovski G.V."/>
            <person name="Ussery D."/>
            <person name="Barrell B.G."/>
            <person name="Nurse P."/>
        </authorList>
    </citation>
    <scope>NUCLEOTIDE SEQUENCE [LARGE SCALE GENOMIC DNA]</scope>
    <source>
        <strain>972 / ATCC 24843</strain>
    </source>
</reference>
<name>PYP3_SCHPO</name>
<evidence type="ECO:0000255" key="1">
    <source>
        <dbReference type="PROSITE-ProRule" id="PRU00160"/>
    </source>
</evidence>
<evidence type="ECO:0000255" key="2">
    <source>
        <dbReference type="PROSITE-ProRule" id="PRU10044"/>
    </source>
</evidence>
<evidence type="ECO:0000305" key="3"/>
<proteinExistence type="inferred from homology"/>